<sequence>MNRAEKREFVTWLNKIFQESGSVVVAHYSGLTVSQMSDLRSKIGEAGGAVKVAKNTLAKIALQGTKSESMANLFTGQTLIAYSEDPIVAPKVAVDFAKANDKLVILGGSMGAVSLSVDAVKSLASLPSLNELRAKLVGMISTPATRVAQVIKAPAGQVARVIGAYAQKGEAA</sequence>
<dbReference type="EMBL" id="CP000524">
    <property type="protein sequence ID" value="ABM44827.1"/>
    <property type="molecule type" value="Genomic_DNA"/>
</dbReference>
<dbReference type="RefSeq" id="WP_005766717.1">
    <property type="nucleotide sequence ID" value="NC_008783.1"/>
</dbReference>
<dbReference type="SMR" id="A1USC6"/>
<dbReference type="STRING" id="360095.BARBAKC583_0569"/>
<dbReference type="GeneID" id="4684223"/>
<dbReference type="KEGG" id="bbk:BARBAKC583_0569"/>
<dbReference type="PATRIC" id="fig|360095.6.peg.550"/>
<dbReference type="eggNOG" id="COG0244">
    <property type="taxonomic scope" value="Bacteria"/>
</dbReference>
<dbReference type="HOGENOM" id="CLU_092227_0_0_5"/>
<dbReference type="OrthoDB" id="9791972at2"/>
<dbReference type="Proteomes" id="UP000000643">
    <property type="component" value="Chromosome"/>
</dbReference>
<dbReference type="GO" id="GO:0015934">
    <property type="term" value="C:large ribosomal subunit"/>
    <property type="evidence" value="ECO:0007669"/>
    <property type="project" value="InterPro"/>
</dbReference>
<dbReference type="GO" id="GO:0070180">
    <property type="term" value="F:large ribosomal subunit rRNA binding"/>
    <property type="evidence" value="ECO:0007669"/>
    <property type="project" value="UniProtKB-UniRule"/>
</dbReference>
<dbReference type="GO" id="GO:0003735">
    <property type="term" value="F:structural constituent of ribosome"/>
    <property type="evidence" value="ECO:0007669"/>
    <property type="project" value="InterPro"/>
</dbReference>
<dbReference type="GO" id="GO:0006412">
    <property type="term" value="P:translation"/>
    <property type="evidence" value="ECO:0007669"/>
    <property type="project" value="UniProtKB-UniRule"/>
</dbReference>
<dbReference type="CDD" id="cd05797">
    <property type="entry name" value="Ribosomal_L10"/>
    <property type="match status" value="1"/>
</dbReference>
<dbReference type="Gene3D" id="3.30.70.1730">
    <property type="match status" value="1"/>
</dbReference>
<dbReference type="Gene3D" id="6.10.250.290">
    <property type="match status" value="1"/>
</dbReference>
<dbReference type="HAMAP" id="MF_00362">
    <property type="entry name" value="Ribosomal_uL10"/>
    <property type="match status" value="1"/>
</dbReference>
<dbReference type="InterPro" id="IPR001790">
    <property type="entry name" value="Ribosomal_uL10"/>
</dbReference>
<dbReference type="InterPro" id="IPR043141">
    <property type="entry name" value="Ribosomal_uL10-like_sf"/>
</dbReference>
<dbReference type="InterPro" id="IPR022973">
    <property type="entry name" value="Ribosomal_uL10_bac"/>
</dbReference>
<dbReference type="InterPro" id="IPR047865">
    <property type="entry name" value="Ribosomal_uL10_bac_type"/>
</dbReference>
<dbReference type="InterPro" id="IPR002363">
    <property type="entry name" value="Ribosomal_uL10_CS_bac"/>
</dbReference>
<dbReference type="NCBIfam" id="NF000955">
    <property type="entry name" value="PRK00099.1-1"/>
    <property type="match status" value="1"/>
</dbReference>
<dbReference type="PANTHER" id="PTHR11560">
    <property type="entry name" value="39S RIBOSOMAL PROTEIN L10, MITOCHONDRIAL"/>
    <property type="match status" value="1"/>
</dbReference>
<dbReference type="Pfam" id="PF00466">
    <property type="entry name" value="Ribosomal_L10"/>
    <property type="match status" value="1"/>
</dbReference>
<dbReference type="SUPFAM" id="SSF160369">
    <property type="entry name" value="Ribosomal protein L10-like"/>
    <property type="match status" value="1"/>
</dbReference>
<dbReference type="PROSITE" id="PS01109">
    <property type="entry name" value="RIBOSOMAL_L10"/>
    <property type="match status" value="1"/>
</dbReference>
<protein>
    <recommendedName>
        <fullName evidence="1">Large ribosomal subunit protein uL10</fullName>
    </recommendedName>
    <alternativeName>
        <fullName evidence="2">50S ribosomal protein L10</fullName>
    </alternativeName>
</protein>
<reference key="1">
    <citation type="submission" date="2006-12" db="EMBL/GenBank/DDBJ databases">
        <authorList>
            <person name="Hendrix L."/>
            <person name="Mohamoud Y."/>
            <person name="Radune D."/>
            <person name="Shvartsbeyn A."/>
            <person name="Daugherty S."/>
            <person name="Dodson R."/>
            <person name="Durkin A.S."/>
            <person name="Harkins D."/>
            <person name="Huot H."/>
            <person name="Kothari S.P."/>
            <person name="Madupu R."/>
            <person name="Li J."/>
            <person name="Nelson W.C."/>
            <person name="Shrivastava S."/>
            <person name="Giglio M.G."/>
            <person name="Haft D."/>
            <person name="Selengut J."/>
            <person name="Fraser-Ligget C."/>
            <person name="Seshadri R."/>
        </authorList>
    </citation>
    <scope>NUCLEOTIDE SEQUENCE [LARGE SCALE GENOMIC DNA]</scope>
    <source>
        <strain>ATCC 35685 / KC583 / Herrer 020/F12,63</strain>
    </source>
</reference>
<organism>
    <name type="scientific">Bartonella bacilliformis (strain ATCC 35685 / KC583 / Herrer 020/F12,63)</name>
    <dbReference type="NCBI Taxonomy" id="360095"/>
    <lineage>
        <taxon>Bacteria</taxon>
        <taxon>Pseudomonadati</taxon>
        <taxon>Pseudomonadota</taxon>
        <taxon>Alphaproteobacteria</taxon>
        <taxon>Hyphomicrobiales</taxon>
        <taxon>Bartonellaceae</taxon>
        <taxon>Bartonella</taxon>
    </lineage>
</organism>
<proteinExistence type="inferred from homology"/>
<comment type="function">
    <text evidence="1">Forms part of the ribosomal stalk, playing a central role in the interaction of the ribosome with GTP-bound translation factors.</text>
</comment>
<comment type="subunit">
    <text evidence="1">Part of the ribosomal stalk of the 50S ribosomal subunit. The N-terminus interacts with L11 and the large rRNA to form the base of the stalk. The C-terminus forms an elongated spine to which L12 dimers bind in a sequential fashion forming a multimeric L10(L12)X complex.</text>
</comment>
<comment type="similarity">
    <text evidence="1">Belongs to the universal ribosomal protein uL10 family.</text>
</comment>
<name>RL10_BARBK</name>
<keyword id="KW-0687">Ribonucleoprotein</keyword>
<keyword id="KW-0689">Ribosomal protein</keyword>
<keyword id="KW-0694">RNA-binding</keyword>
<keyword id="KW-0699">rRNA-binding</keyword>
<feature type="chain" id="PRO_1000005469" description="Large ribosomal subunit protein uL10">
    <location>
        <begin position="1"/>
        <end position="172"/>
    </location>
</feature>
<gene>
    <name evidence="1" type="primary">rplJ</name>
    <name type="ordered locus">BARBAKC583_0569</name>
</gene>
<accession>A1USC6</accession>
<evidence type="ECO:0000255" key="1">
    <source>
        <dbReference type="HAMAP-Rule" id="MF_00362"/>
    </source>
</evidence>
<evidence type="ECO:0000305" key="2"/>